<sequence length="534" mass="58802">MDNNTLFAQSISLKELGIENATVRYQLSADELHAITVQSGQGVEASTGALAINTGEFTGRSPQDRFIVKDSITEDKVWWGNVNIPFAPEAFEKLYNKVKAFLSNKEVFVRDSYVCSDPNYRLNVRVVTETAWSNLFCYNMFLRPEDSELANFTPEWTVVCAPSFMADPAVDGTRQSNFAILDFTKKIALIGGTGYTGEMKKGIFSALNFILPVFENTLPMHCSANVGKDGDTAIFFGLSGTGKTTLSADPERKLIGDDEHGWTAENTVFNFEGGCYAKVINLTEENEPDIFRAIKKGALLENVVFKAGTNEVDFDDVSITQNTRVSYPITHIDNIQPGSIGHNPKNIFFLTADSFGILPPISKLTPGQAAYHFISGYTAKVAGTEAGVTEPQPNFSACFGAPFMPLHPTKYAEMLSKKMKDADVKVWLINTGWTGGAYGTGSRMKLKYTRAMITAALNGELDNVEYVNHKVFGIAKPQSCPNVPSEILNPRNTWEDKDLYDKKALELAQKFKANFAKFEEFANAEILAGAPITE</sequence>
<keyword id="KW-0067">ATP-binding</keyword>
<keyword id="KW-0963">Cytoplasm</keyword>
<keyword id="KW-0210">Decarboxylase</keyword>
<keyword id="KW-0312">Gluconeogenesis</keyword>
<keyword id="KW-0456">Lyase</keyword>
<keyword id="KW-0464">Manganese</keyword>
<keyword id="KW-0479">Metal-binding</keyword>
<keyword id="KW-0547">Nucleotide-binding</keyword>
<comment type="function">
    <text evidence="1">Involved in the gluconeogenesis. Catalyzes the conversion of oxaloacetate (OAA) to phosphoenolpyruvate (PEP) through direct phosphoryl transfer between the nucleoside triphosphate and OAA.</text>
</comment>
<comment type="catalytic activity">
    <reaction evidence="1">
        <text>oxaloacetate + ATP = phosphoenolpyruvate + ADP + CO2</text>
        <dbReference type="Rhea" id="RHEA:18617"/>
        <dbReference type="ChEBI" id="CHEBI:16452"/>
        <dbReference type="ChEBI" id="CHEBI:16526"/>
        <dbReference type="ChEBI" id="CHEBI:30616"/>
        <dbReference type="ChEBI" id="CHEBI:58702"/>
        <dbReference type="ChEBI" id="CHEBI:456216"/>
        <dbReference type="EC" id="4.1.1.49"/>
    </reaction>
</comment>
<comment type="cofactor">
    <cofactor evidence="1">
        <name>Mn(2+)</name>
        <dbReference type="ChEBI" id="CHEBI:29035"/>
    </cofactor>
    <text evidence="1">Binds 1 Mn(2+) ion per subunit.</text>
</comment>
<comment type="pathway">
    <text evidence="1">Carbohydrate biosynthesis; gluconeogenesis.</text>
</comment>
<comment type="subcellular location">
    <subcellularLocation>
        <location evidence="1">Cytoplasm</location>
    </subcellularLocation>
</comment>
<comment type="similarity">
    <text evidence="1">Belongs to the phosphoenolpyruvate carboxykinase (ATP) family.</text>
</comment>
<feature type="chain" id="PRO_1000192316" description="Phosphoenolpyruvate carboxykinase (ATP)">
    <location>
        <begin position="1"/>
        <end position="534"/>
    </location>
</feature>
<feature type="binding site" evidence="1">
    <location>
        <position position="60"/>
    </location>
    <ligand>
        <name>substrate</name>
    </ligand>
</feature>
<feature type="binding site" evidence="1">
    <location>
        <position position="195"/>
    </location>
    <ligand>
        <name>substrate</name>
    </ligand>
</feature>
<feature type="binding site" evidence="1">
    <location>
        <position position="201"/>
    </location>
    <ligand>
        <name>ATP</name>
        <dbReference type="ChEBI" id="CHEBI:30616"/>
    </ligand>
</feature>
<feature type="binding site" evidence="1">
    <location>
        <position position="201"/>
    </location>
    <ligand>
        <name>Mn(2+)</name>
        <dbReference type="ChEBI" id="CHEBI:29035"/>
    </ligand>
</feature>
<feature type="binding site" evidence="1">
    <location>
        <position position="201"/>
    </location>
    <ligand>
        <name>substrate</name>
    </ligand>
</feature>
<feature type="binding site" evidence="1">
    <location>
        <position position="221"/>
    </location>
    <ligand>
        <name>ATP</name>
        <dbReference type="ChEBI" id="CHEBI:30616"/>
    </ligand>
</feature>
<feature type="binding site" evidence="1">
    <location>
        <position position="221"/>
    </location>
    <ligand>
        <name>Mn(2+)</name>
        <dbReference type="ChEBI" id="CHEBI:29035"/>
    </ligand>
</feature>
<feature type="binding site" evidence="1">
    <location>
        <begin position="237"/>
        <end position="245"/>
    </location>
    <ligand>
        <name>ATP</name>
        <dbReference type="ChEBI" id="CHEBI:30616"/>
    </ligand>
</feature>
<feature type="binding site" evidence="1">
    <location>
        <position position="258"/>
    </location>
    <ligand>
        <name>Mn(2+)</name>
        <dbReference type="ChEBI" id="CHEBI:29035"/>
    </ligand>
</feature>
<feature type="binding site" evidence="1">
    <location>
        <position position="287"/>
    </location>
    <ligand>
        <name>ATP</name>
        <dbReference type="ChEBI" id="CHEBI:30616"/>
    </ligand>
</feature>
<feature type="binding site" evidence="1">
    <location>
        <position position="324"/>
    </location>
    <ligand>
        <name>ATP</name>
        <dbReference type="ChEBI" id="CHEBI:30616"/>
    </ligand>
</feature>
<feature type="binding site" evidence="1">
    <location>
        <position position="324"/>
    </location>
    <ligand>
        <name>substrate</name>
    </ligand>
</feature>
<feature type="binding site" evidence="1">
    <location>
        <position position="449"/>
    </location>
    <ligand>
        <name>ATP</name>
        <dbReference type="ChEBI" id="CHEBI:30616"/>
    </ligand>
</feature>
<gene>
    <name evidence="1" type="primary">pckA</name>
    <name type="ordered locus">Fjoh_1366</name>
</gene>
<evidence type="ECO:0000255" key="1">
    <source>
        <dbReference type="HAMAP-Rule" id="MF_00453"/>
    </source>
</evidence>
<dbReference type="EC" id="4.1.1.49" evidence="1"/>
<dbReference type="EMBL" id="CP000685">
    <property type="protein sequence ID" value="ABQ04398.1"/>
    <property type="molecule type" value="Genomic_DNA"/>
</dbReference>
<dbReference type="RefSeq" id="WP_012023446.1">
    <property type="nucleotide sequence ID" value="NC_009441.1"/>
</dbReference>
<dbReference type="SMR" id="A5FK68"/>
<dbReference type="STRING" id="376686.Fjoh_1366"/>
<dbReference type="KEGG" id="fjo:Fjoh_1366"/>
<dbReference type="eggNOG" id="COG1866">
    <property type="taxonomic scope" value="Bacteria"/>
</dbReference>
<dbReference type="HOGENOM" id="CLU_018247_0_1_10"/>
<dbReference type="OrthoDB" id="9806325at2"/>
<dbReference type="UniPathway" id="UPA00138"/>
<dbReference type="Proteomes" id="UP000006694">
    <property type="component" value="Chromosome"/>
</dbReference>
<dbReference type="GO" id="GO:0005829">
    <property type="term" value="C:cytosol"/>
    <property type="evidence" value="ECO:0007669"/>
    <property type="project" value="TreeGrafter"/>
</dbReference>
<dbReference type="GO" id="GO:0005524">
    <property type="term" value="F:ATP binding"/>
    <property type="evidence" value="ECO:0007669"/>
    <property type="project" value="UniProtKB-UniRule"/>
</dbReference>
<dbReference type="GO" id="GO:0046872">
    <property type="term" value="F:metal ion binding"/>
    <property type="evidence" value="ECO:0007669"/>
    <property type="project" value="UniProtKB-KW"/>
</dbReference>
<dbReference type="GO" id="GO:0004612">
    <property type="term" value="F:phosphoenolpyruvate carboxykinase (ATP) activity"/>
    <property type="evidence" value="ECO:0007669"/>
    <property type="project" value="UniProtKB-UniRule"/>
</dbReference>
<dbReference type="GO" id="GO:0006094">
    <property type="term" value="P:gluconeogenesis"/>
    <property type="evidence" value="ECO:0007669"/>
    <property type="project" value="UniProtKB-UniRule"/>
</dbReference>
<dbReference type="CDD" id="cd00484">
    <property type="entry name" value="PEPCK_ATP"/>
    <property type="match status" value="1"/>
</dbReference>
<dbReference type="FunFam" id="2.170.8.10:FF:000001">
    <property type="entry name" value="Phosphoenolpyruvate carboxykinase (ATP)"/>
    <property type="match status" value="1"/>
</dbReference>
<dbReference type="Gene3D" id="3.90.228.20">
    <property type="match status" value="1"/>
</dbReference>
<dbReference type="Gene3D" id="3.40.449.10">
    <property type="entry name" value="Phosphoenolpyruvate Carboxykinase, domain 1"/>
    <property type="match status" value="1"/>
</dbReference>
<dbReference type="Gene3D" id="2.170.8.10">
    <property type="entry name" value="Phosphoenolpyruvate Carboxykinase, domain 2"/>
    <property type="match status" value="1"/>
</dbReference>
<dbReference type="HAMAP" id="MF_00453">
    <property type="entry name" value="PEPCK_ATP"/>
    <property type="match status" value="1"/>
</dbReference>
<dbReference type="InterPro" id="IPR001272">
    <property type="entry name" value="PEP_carboxykinase_ATP"/>
</dbReference>
<dbReference type="InterPro" id="IPR013035">
    <property type="entry name" value="PEP_carboxykinase_C"/>
</dbReference>
<dbReference type="InterPro" id="IPR008210">
    <property type="entry name" value="PEP_carboxykinase_N"/>
</dbReference>
<dbReference type="NCBIfam" id="TIGR00224">
    <property type="entry name" value="pckA"/>
    <property type="match status" value="1"/>
</dbReference>
<dbReference type="NCBIfam" id="NF006820">
    <property type="entry name" value="PRK09344.1-2"/>
    <property type="match status" value="1"/>
</dbReference>
<dbReference type="NCBIfam" id="NF006821">
    <property type="entry name" value="PRK09344.1-3"/>
    <property type="match status" value="1"/>
</dbReference>
<dbReference type="PANTHER" id="PTHR30031:SF0">
    <property type="entry name" value="PHOSPHOENOLPYRUVATE CARBOXYKINASE (ATP)"/>
    <property type="match status" value="1"/>
</dbReference>
<dbReference type="PANTHER" id="PTHR30031">
    <property type="entry name" value="PHOSPHOENOLPYRUVATE CARBOXYKINASE ATP"/>
    <property type="match status" value="1"/>
</dbReference>
<dbReference type="Pfam" id="PF01293">
    <property type="entry name" value="PEPCK_ATP"/>
    <property type="match status" value="1"/>
</dbReference>
<dbReference type="PIRSF" id="PIRSF006294">
    <property type="entry name" value="PEP_crbxkin"/>
    <property type="match status" value="1"/>
</dbReference>
<dbReference type="SUPFAM" id="SSF68923">
    <property type="entry name" value="PEP carboxykinase N-terminal domain"/>
    <property type="match status" value="1"/>
</dbReference>
<dbReference type="SUPFAM" id="SSF53795">
    <property type="entry name" value="PEP carboxykinase-like"/>
    <property type="match status" value="1"/>
</dbReference>
<accession>A5FK68</accession>
<protein>
    <recommendedName>
        <fullName evidence="1">Phosphoenolpyruvate carboxykinase (ATP)</fullName>
        <shortName evidence="1">PCK</shortName>
        <shortName evidence="1">PEP carboxykinase</shortName>
        <shortName evidence="1">PEPCK</shortName>
        <ecNumber evidence="1">4.1.1.49</ecNumber>
    </recommendedName>
</protein>
<name>PCKA_FLAJ1</name>
<reference key="1">
    <citation type="journal article" date="2009" name="Appl. Environ. Microbiol.">
        <title>Novel features of the polysaccharide-digesting gliding bacterium Flavobacterium johnsoniae as revealed by genome sequence analysis.</title>
        <authorList>
            <person name="McBride M.J."/>
            <person name="Xie G."/>
            <person name="Martens E.C."/>
            <person name="Lapidus A."/>
            <person name="Henrissat B."/>
            <person name="Rhodes R.G."/>
            <person name="Goltsman E."/>
            <person name="Wang W."/>
            <person name="Xu J."/>
            <person name="Hunnicutt D.W."/>
            <person name="Staroscik A.M."/>
            <person name="Hoover T.R."/>
            <person name="Cheng Y.Q."/>
            <person name="Stein J.L."/>
        </authorList>
    </citation>
    <scope>NUCLEOTIDE SEQUENCE [LARGE SCALE GENOMIC DNA]</scope>
    <source>
        <strain>ATCC 17061 / DSM 2064 / JCM 8514 / BCRC 14874 / CCUG 350202 / NBRC 14942 / NCIMB 11054 / UW101</strain>
    </source>
</reference>
<proteinExistence type="inferred from homology"/>
<organism>
    <name type="scientific">Flavobacterium johnsoniae (strain ATCC 17061 / DSM 2064 / JCM 8514 / BCRC 14874 / CCUG 350202 / NBRC 14942 / NCIMB 11054 / UW101)</name>
    <name type="common">Cytophaga johnsonae</name>
    <dbReference type="NCBI Taxonomy" id="376686"/>
    <lineage>
        <taxon>Bacteria</taxon>
        <taxon>Pseudomonadati</taxon>
        <taxon>Bacteroidota</taxon>
        <taxon>Flavobacteriia</taxon>
        <taxon>Flavobacteriales</taxon>
        <taxon>Flavobacteriaceae</taxon>
        <taxon>Flavobacterium</taxon>
    </lineage>
</organism>